<accession>P43282</accession>
<feature type="chain" id="PRO_0000174466" description="S-adenosylmethionine synthase 3">
    <location>
        <begin position="1"/>
        <end position="390"/>
    </location>
</feature>
<feature type="binding site" evidence="3">
    <location>
        <position position="9"/>
    </location>
    <ligand>
        <name>Mg(2+)</name>
        <dbReference type="ChEBI" id="CHEBI:18420"/>
    </ligand>
</feature>
<feature type="binding site" description="in other chain" evidence="4">
    <location>
        <position position="15"/>
    </location>
    <ligand>
        <name>ATP</name>
        <dbReference type="ChEBI" id="CHEBI:30616"/>
        <note>ligand shared between two neighboring subunits</note>
    </ligand>
</feature>
<feature type="binding site" evidence="2">
    <location>
        <position position="43"/>
    </location>
    <ligand>
        <name>K(+)</name>
        <dbReference type="ChEBI" id="CHEBI:29103"/>
    </ligand>
</feature>
<feature type="binding site" description="in other chain" evidence="2">
    <location>
        <position position="56"/>
    </location>
    <ligand>
        <name>L-methionine</name>
        <dbReference type="ChEBI" id="CHEBI:57844"/>
        <note>ligand shared between two neighboring subunits</note>
    </ligand>
</feature>
<feature type="binding site" description="in other chain" evidence="2">
    <location>
        <position position="99"/>
    </location>
    <ligand>
        <name>L-methionine</name>
        <dbReference type="ChEBI" id="CHEBI:57844"/>
        <note>ligand shared between two neighboring subunits</note>
    </ligand>
</feature>
<feature type="binding site" description="in other chain" evidence="4">
    <location>
        <begin position="167"/>
        <end position="169"/>
    </location>
    <ligand>
        <name>ATP</name>
        <dbReference type="ChEBI" id="CHEBI:30616"/>
        <note>ligand shared between two neighboring subunits</note>
    </ligand>
</feature>
<feature type="binding site" description="in other chain" evidence="4">
    <location>
        <begin position="235"/>
        <end position="238"/>
    </location>
    <ligand>
        <name>ATP</name>
        <dbReference type="ChEBI" id="CHEBI:30616"/>
        <note>ligand shared between two neighboring subunits</note>
    </ligand>
</feature>
<feature type="binding site" description="in other chain" evidence="4">
    <location>
        <position position="246"/>
    </location>
    <ligand>
        <name>ATP</name>
        <dbReference type="ChEBI" id="CHEBI:30616"/>
        <note>ligand shared between two neighboring subunits</note>
    </ligand>
</feature>
<feature type="binding site" evidence="2">
    <location>
        <position position="246"/>
    </location>
    <ligand>
        <name>L-methionine</name>
        <dbReference type="ChEBI" id="CHEBI:57844"/>
        <note>ligand shared between two neighboring subunits</note>
    </ligand>
</feature>
<feature type="binding site" description="in other chain" evidence="2">
    <location>
        <begin position="252"/>
        <end position="253"/>
    </location>
    <ligand>
        <name>ATP</name>
        <dbReference type="ChEBI" id="CHEBI:30616"/>
        <note>ligand shared between two neighboring subunits</note>
    </ligand>
</feature>
<feature type="binding site" evidence="2">
    <location>
        <position position="269"/>
    </location>
    <ligand>
        <name>ATP</name>
        <dbReference type="ChEBI" id="CHEBI:30616"/>
        <note>ligand shared between two neighboring subunits</note>
    </ligand>
</feature>
<feature type="binding site" evidence="2">
    <location>
        <position position="273"/>
    </location>
    <ligand>
        <name>ATP</name>
        <dbReference type="ChEBI" id="CHEBI:30616"/>
        <note>ligand shared between two neighboring subunits</note>
    </ligand>
</feature>
<feature type="binding site" evidence="3">
    <location>
        <position position="277"/>
    </location>
    <ligand>
        <name>ATP</name>
        <dbReference type="ChEBI" id="CHEBI:30616"/>
        <note>ligand shared between two neighboring subunits</note>
    </ligand>
</feature>
<feature type="binding site" description="in other chain" evidence="2">
    <location>
        <position position="277"/>
    </location>
    <ligand>
        <name>L-methionine</name>
        <dbReference type="ChEBI" id="CHEBI:57844"/>
        <note>ligand shared between two neighboring subunits</note>
    </ligand>
</feature>
<gene>
    <name type="primary">SAM3</name>
</gene>
<keyword id="KW-0067">ATP-binding</keyword>
<keyword id="KW-0170">Cobalt</keyword>
<keyword id="KW-0963">Cytoplasm</keyword>
<keyword id="KW-0460">Magnesium</keyword>
<keyword id="KW-0479">Metal-binding</keyword>
<keyword id="KW-0547">Nucleotide-binding</keyword>
<keyword id="KW-0554">One-carbon metabolism</keyword>
<keyword id="KW-0630">Potassium</keyword>
<keyword id="KW-1185">Reference proteome</keyword>
<keyword id="KW-0808">Transferase</keyword>
<evidence type="ECO:0000250" key="1"/>
<evidence type="ECO:0000250" key="2">
    <source>
        <dbReference type="UniProtKB" id="P0A817"/>
    </source>
</evidence>
<evidence type="ECO:0000250" key="3">
    <source>
        <dbReference type="UniProtKB" id="P13444"/>
    </source>
</evidence>
<evidence type="ECO:0000250" key="4">
    <source>
        <dbReference type="UniProtKB" id="Q00266"/>
    </source>
</evidence>
<evidence type="ECO:0000250" key="5">
    <source>
        <dbReference type="UniProtKB" id="Q96551"/>
    </source>
</evidence>
<evidence type="ECO:0000269" key="6">
    <source>
    </source>
</evidence>
<evidence type="ECO:0000305" key="7"/>
<organism>
    <name type="scientific">Solanum lycopersicum</name>
    <name type="common">Tomato</name>
    <name type="synonym">Lycopersicon esculentum</name>
    <dbReference type="NCBI Taxonomy" id="4081"/>
    <lineage>
        <taxon>Eukaryota</taxon>
        <taxon>Viridiplantae</taxon>
        <taxon>Streptophyta</taxon>
        <taxon>Embryophyta</taxon>
        <taxon>Tracheophyta</taxon>
        <taxon>Spermatophyta</taxon>
        <taxon>Magnoliopsida</taxon>
        <taxon>eudicotyledons</taxon>
        <taxon>Gunneridae</taxon>
        <taxon>Pentapetalae</taxon>
        <taxon>asterids</taxon>
        <taxon>lamiids</taxon>
        <taxon>Solanales</taxon>
        <taxon>Solanaceae</taxon>
        <taxon>Solanoideae</taxon>
        <taxon>Solaneae</taxon>
        <taxon>Solanum</taxon>
        <taxon>Solanum subgen. Lycopersicon</taxon>
    </lineage>
</organism>
<proteinExistence type="evidence at transcript level"/>
<protein>
    <recommendedName>
        <fullName>S-adenosylmethionine synthase 3</fullName>
        <shortName>AdoMet synthase 3</shortName>
        <ecNumber evidence="5">2.5.1.6</ecNumber>
    </recommendedName>
    <alternativeName>
        <fullName>Methionine adenosyltransferase 3</fullName>
        <shortName>MAT 3</shortName>
    </alternativeName>
</protein>
<reference key="1">
    <citation type="journal article" date="1994" name="Plant Mol. Biol.">
        <title>Differential accumulation of S-adenosylmethionine synthetase transcripts in response to salt stress.</title>
        <authorList>
            <person name="Espartero J."/>
            <person name="Pintor-Toro J.A."/>
            <person name="Pardo J.M."/>
        </authorList>
    </citation>
    <scope>NUCLEOTIDE SEQUENCE [MRNA]</scope>
    <scope>TISSUE SPECIFICITY</scope>
    <scope>INDUCTION</scope>
    <source>
        <strain>cv. Rutgers</strain>
        <tissue>Seedling</tissue>
    </source>
</reference>
<sequence length="390" mass="42652">METFLFTSESVNEGHPDKLCDQVSDAILDACLEQDPESKVACETCTKTNMVMVFGEITTKATVDYEKIVRDTCRGIGFVSADVGLDADNCKVLVNIEQQSPDIAQGVHGHLTKKPEEIGAGDQGHMFGYATDETPELMPLTHVLATKLGAKLTEVRKNKTCPWLRPDGKTQVTVEYKNDNGAMVPIRVHTVLISTQHDETVTNDQIAQDLKEHVIKPVIPAKYLDENTIFHLNPSGRFVIGGPHGDAGLTGRKIIIDTYGGWGAHGGGAFSGKDPTKVDRSGAYIVRQAAKSVVASGLARRCIVQVSYAIGVAEPLSVFVDTYKTGTIPDKDILVLIKENFDFRPGMMSINLDLLRGGNYRYQKTAAYGHFGRDDPDFTWETVKVLKPKA</sequence>
<name>METK3_SOLLC</name>
<comment type="function">
    <text evidence="5">Catalyzes the formation of S-adenosylmethionine from methionine and ATP. The reaction comprises two steps that are both catalyzed by the same enzyme: formation of S-adenosylmethionine (AdoMet) and triphosphate, and subsequent hydrolysis of the triphosphate.</text>
</comment>
<comment type="catalytic activity">
    <reaction evidence="5">
        <text>L-methionine + ATP + H2O = S-adenosyl-L-methionine + phosphate + diphosphate</text>
        <dbReference type="Rhea" id="RHEA:21080"/>
        <dbReference type="ChEBI" id="CHEBI:15377"/>
        <dbReference type="ChEBI" id="CHEBI:30616"/>
        <dbReference type="ChEBI" id="CHEBI:33019"/>
        <dbReference type="ChEBI" id="CHEBI:43474"/>
        <dbReference type="ChEBI" id="CHEBI:57844"/>
        <dbReference type="ChEBI" id="CHEBI:59789"/>
        <dbReference type="EC" id="2.5.1.6"/>
    </reaction>
</comment>
<comment type="cofactor">
    <cofactor evidence="5">
        <name>Mn(2+)</name>
        <dbReference type="ChEBI" id="CHEBI:29035"/>
    </cofactor>
    <cofactor evidence="5">
        <name>Mg(2+)</name>
        <dbReference type="ChEBI" id="CHEBI:18420"/>
    </cofactor>
    <cofactor evidence="5">
        <name>Co(2+)</name>
        <dbReference type="ChEBI" id="CHEBI:48828"/>
    </cofactor>
    <text evidence="3 5">Binds 2 divalent ions per subunit. The metal ions interact primarily with the substrate (By similarity). Can utilize magnesium, manganese or cobalt (in vitro) (By similarity).</text>
</comment>
<comment type="cofactor">
    <cofactor evidence="5">
        <name>K(+)</name>
        <dbReference type="ChEBI" id="CHEBI:29103"/>
    </cofactor>
    <text evidence="3">Binds 1 potassium ion per subunit. The potassium ion interacts primarily with the substrate (By similarity).</text>
</comment>
<comment type="pathway">
    <text evidence="5">Amino-acid biosynthesis; S-adenosyl-L-methionine biosynthesis; S-adenosyl-L-methionine from L-methionine: step 1/1.</text>
</comment>
<comment type="subunit">
    <text evidence="1">Homotetramer.</text>
</comment>
<comment type="subcellular location">
    <subcellularLocation>
        <location evidence="1">Cytoplasm</location>
    </subcellularLocation>
</comment>
<comment type="tissue specificity">
    <text evidence="6">Mostly expressed in stems and leaves.</text>
</comment>
<comment type="induction">
    <text evidence="6">By salt stress, ABA, and mannitol in roots. Repressed in leaves by the same treatments.</text>
</comment>
<comment type="similarity">
    <text evidence="7">Belongs to the AdoMet synthase family.</text>
</comment>
<dbReference type="EC" id="2.5.1.6" evidence="5"/>
<dbReference type="EMBL" id="Z24743">
    <property type="protein sequence ID" value="CAA80867.1"/>
    <property type="molecule type" value="mRNA"/>
</dbReference>
<dbReference type="PIR" id="S46540">
    <property type="entry name" value="S46540"/>
</dbReference>
<dbReference type="RefSeq" id="NP_001234004.1">
    <property type="nucleotide sequence ID" value="NM_001247075.3"/>
</dbReference>
<dbReference type="RefSeq" id="NP_001304005.1">
    <property type="nucleotide sequence ID" value="NM_001317076.1"/>
</dbReference>
<dbReference type="RefSeq" id="NP_001388755.1">
    <property type="nucleotide sequence ID" value="NM_001401826.1"/>
</dbReference>
<dbReference type="SMR" id="P43282"/>
<dbReference type="FunCoup" id="P43282">
    <property type="interactions" value="2240"/>
</dbReference>
<dbReference type="STRING" id="4081.P43282"/>
<dbReference type="PaxDb" id="4081-Solyc09g008280.1.1"/>
<dbReference type="EnsemblPlants" id="Solyc09g008280.2.1">
    <property type="protein sequence ID" value="Solyc09g008280.2.1.1"/>
    <property type="gene ID" value="Solyc09g008280.2"/>
</dbReference>
<dbReference type="GeneID" id="544302"/>
<dbReference type="Gramene" id="Solyc09g008280.2.1">
    <property type="protein sequence ID" value="Solyc09g008280.2.1.1"/>
    <property type="gene ID" value="Solyc09g008280.2"/>
</dbReference>
<dbReference type="KEGG" id="sly:544302"/>
<dbReference type="eggNOG" id="KOG1506">
    <property type="taxonomic scope" value="Eukaryota"/>
</dbReference>
<dbReference type="HOGENOM" id="CLU_041802_0_1_1"/>
<dbReference type="InParanoid" id="P43282"/>
<dbReference type="OMA" id="TVEYRMS"/>
<dbReference type="OrthoDB" id="5852090at2759"/>
<dbReference type="PhylomeDB" id="P43282"/>
<dbReference type="UniPathway" id="UPA00315">
    <property type="reaction ID" value="UER00080"/>
</dbReference>
<dbReference type="Proteomes" id="UP000004994">
    <property type="component" value="Chromosome 9"/>
</dbReference>
<dbReference type="GO" id="GO:0005829">
    <property type="term" value="C:cytosol"/>
    <property type="evidence" value="ECO:0000318"/>
    <property type="project" value="GO_Central"/>
</dbReference>
<dbReference type="GO" id="GO:0005524">
    <property type="term" value="F:ATP binding"/>
    <property type="evidence" value="ECO:0007669"/>
    <property type="project" value="UniProtKB-KW"/>
</dbReference>
<dbReference type="GO" id="GO:0046872">
    <property type="term" value="F:metal ion binding"/>
    <property type="evidence" value="ECO:0007669"/>
    <property type="project" value="UniProtKB-KW"/>
</dbReference>
<dbReference type="GO" id="GO:0004478">
    <property type="term" value="F:methionine adenosyltransferase activity"/>
    <property type="evidence" value="ECO:0000318"/>
    <property type="project" value="GO_Central"/>
</dbReference>
<dbReference type="GO" id="GO:0006730">
    <property type="term" value="P:one-carbon metabolic process"/>
    <property type="evidence" value="ECO:0007669"/>
    <property type="project" value="UniProtKB-KW"/>
</dbReference>
<dbReference type="GO" id="GO:0006556">
    <property type="term" value="P:S-adenosylmethionine biosynthetic process"/>
    <property type="evidence" value="ECO:0000318"/>
    <property type="project" value="GO_Central"/>
</dbReference>
<dbReference type="CDD" id="cd18079">
    <property type="entry name" value="S-AdoMet_synt"/>
    <property type="match status" value="1"/>
</dbReference>
<dbReference type="FunFam" id="3.30.300.10:FF:000001">
    <property type="entry name" value="S-adenosylmethionine synthase"/>
    <property type="match status" value="1"/>
</dbReference>
<dbReference type="FunFam" id="3.30.300.10:FF:000003">
    <property type="entry name" value="S-adenosylmethionine synthase"/>
    <property type="match status" value="1"/>
</dbReference>
<dbReference type="FunFam" id="3.30.300.10:FF:000004">
    <property type="entry name" value="S-adenosylmethionine synthase"/>
    <property type="match status" value="1"/>
</dbReference>
<dbReference type="Gene3D" id="3.30.300.10">
    <property type="match status" value="3"/>
</dbReference>
<dbReference type="HAMAP" id="MF_00086">
    <property type="entry name" value="S_AdoMet_synth1"/>
    <property type="match status" value="1"/>
</dbReference>
<dbReference type="InterPro" id="IPR022631">
    <property type="entry name" value="ADOMET_SYNTHASE_CS"/>
</dbReference>
<dbReference type="InterPro" id="IPR022630">
    <property type="entry name" value="S-AdoMet_synt_C"/>
</dbReference>
<dbReference type="InterPro" id="IPR022629">
    <property type="entry name" value="S-AdoMet_synt_central"/>
</dbReference>
<dbReference type="InterPro" id="IPR022628">
    <property type="entry name" value="S-AdoMet_synt_N"/>
</dbReference>
<dbReference type="InterPro" id="IPR002133">
    <property type="entry name" value="S-AdoMet_synthetase"/>
</dbReference>
<dbReference type="InterPro" id="IPR022636">
    <property type="entry name" value="S-AdoMet_synthetase_sfam"/>
</dbReference>
<dbReference type="NCBIfam" id="TIGR01034">
    <property type="entry name" value="metK"/>
    <property type="match status" value="1"/>
</dbReference>
<dbReference type="PANTHER" id="PTHR11964">
    <property type="entry name" value="S-ADENOSYLMETHIONINE SYNTHETASE"/>
    <property type="match status" value="1"/>
</dbReference>
<dbReference type="Pfam" id="PF02773">
    <property type="entry name" value="S-AdoMet_synt_C"/>
    <property type="match status" value="1"/>
</dbReference>
<dbReference type="Pfam" id="PF02772">
    <property type="entry name" value="S-AdoMet_synt_M"/>
    <property type="match status" value="1"/>
</dbReference>
<dbReference type="Pfam" id="PF00438">
    <property type="entry name" value="S-AdoMet_synt_N"/>
    <property type="match status" value="1"/>
</dbReference>
<dbReference type="PIRSF" id="PIRSF000497">
    <property type="entry name" value="MAT"/>
    <property type="match status" value="1"/>
</dbReference>
<dbReference type="SUPFAM" id="SSF55973">
    <property type="entry name" value="S-adenosylmethionine synthetase"/>
    <property type="match status" value="3"/>
</dbReference>
<dbReference type="PROSITE" id="PS00376">
    <property type="entry name" value="ADOMET_SYNTHASE_1"/>
    <property type="match status" value="1"/>
</dbReference>
<dbReference type="PROSITE" id="PS00377">
    <property type="entry name" value="ADOMET_SYNTHASE_2"/>
    <property type="match status" value="1"/>
</dbReference>